<feature type="chain" id="PRO_1000144652" description="Large ribosomal subunit protein uL30">
    <location>
        <begin position="1"/>
        <end position="61"/>
    </location>
</feature>
<evidence type="ECO:0000255" key="1">
    <source>
        <dbReference type="HAMAP-Rule" id="MF_01371"/>
    </source>
</evidence>
<evidence type="ECO:0000305" key="2"/>
<protein>
    <recommendedName>
        <fullName evidence="1">Large ribosomal subunit protein uL30</fullName>
    </recommendedName>
    <alternativeName>
        <fullName evidence="2">50S ribosomal protein L30</fullName>
    </alternativeName>
</protein>
<accession>B3DQD2</accession>
<proteinExistence type="inferred from homology"/>
<dbReference type="EMBL" id="CP000605">
    <property type="protein sequence ID" value="ACD99170.1"/>
    <property type="molecule type" value="Genomic_DNA"/>
</dbReference>
<dbReference type="RefSeq" id="WP_007053043.1">
    <property type="nucleotide sequence ID" value="NZ_AABM02000025.1"/>
</dbReference>
<dbReference type="SMR" id="B3DQD2"/>
<dbReference type="GeneID" id="69578879"/>
<dbReference type="KEGG" id="blj:BLD_1725"/>
<dbReference type="HOGENOM" id="CLU_131047_2_0_11"/>
<dbReference type="Proteomes" id="UP000002419">
    <property type="component" value="Chromosome"/>
</dbReference>
<dbReference type="GO" id="GO:0022625">
    <property type="term" value="C:cytosolic large ribosomal subunit"/>
    <property type="evidence" value="ECO:0007669"/>
    <property type="project" value="TreeGrafter"/>
</dbReference>
<dbReference type="GO" id="GO:0003735">
    <property type="term" value="F:structural constituent of ribosome"/>
    <property type="evidence" value="ECO:0007669"/>
    <property type="project" value="InterPro"/>
</dbReference>
<dbReference type="GO" id="GO:0006412">
    <property type="term" value="P:translation"/>
    <property type="evidence" value="ECO:0007669"/>
    <property type="project" value="UniProtKB-UniRule"/>
</dbReference>
<dbReference type="CDD" id="cd01658">
    <property type="entry name" value="Ribosomal_L30"/>
    <property type="match status" value="1"/>
</dbReference>
<dbReference type="Gene3D" id="3.30.1390.20">
    <property type="entry name" value="Ribosomal protein L30, ferredoxin-like fold domain"/>
    <property type="match status" value="1"/>
</dbReference>
<dbReference type="HAMAP" id="MF_01371_B">
    <property type="entry name" value="Ribosomal_uL30_B"/>
    <property type="match status" value="1"/>
</dbReference>
<dbReference type="InterPro" id="IPR036919">
    <property type="entry name" value="Ribo_uL30_ferredoxin-like_sf"/>
</dbReference>
<dbReference type="InterPro" id="IPR005996">
    <property type="entry name" value="Ribosomal_uL30_bac-type"/>
</dbReference>
<dbReference type="InterPro" id="IPR016082">
    <property type="entry name" value="Ribosomal_uL30_ferredoxin-like"/>
</dbReference>
<dbReference type="NCBIfam" id="TIGR01308">
    <property type="entry name" value="rpmD_bact"/>
    <property type="match status" value="1"/>
</dbReference>
<dbReference type="PANTHER" id="PTHR15892:SF2">
    <property type="entry name" value="LARGE RIBOSOMAL SUBUNIT PROTEIN UL30M"/>
    <property type="match status" value="1"/>
</dbReference>
<dbReference type="PANTHER" id="PTHR15892">
    <property type="entry name" value="MITOCHONDRIAL RIBOSOMAL PROTEIN L30"/>
    <property type="match status" value="1"/>
</dbReference>
<dbReference type="Pfam" id="PF00327">
    <property type="entry name" value="Ribosomal_L30"/>
    <property type="match status" value="1"/>
</dbReference>
<dbReference type="PIRSF" id="PIRSF002211">
    <property type="entry name" value="Ribosomal_L30_bac-type"/>
    <property type="match status" value="1"/>
</dbReference>
<dbReference type="SUPFAM" id="SSF55129">
    <property type="entry name" value="Ribosomal protein L30p/L7e"/>
    <property type="match status" value="1"/>
</dbReference>
<reference key="1">
    <citation type="journal article" date="2008" name="BMC Genomics">
        <title>Comparative genomic analysis of the gut bacterium Bifidobacterium longum reveals loci susceptible to deletion during pure culture growth.</title>
        <authorList>
            <person name="Lee J.H."/>
            <person name="Karamychev V.N."/>
            <person name="Kozyavkin S.A."/>
            <person name="Mills D."/>
            <person name="Pavlov A.R."/>
            <person name="Pavlova N.V."/>
            <person name="Polouchine N.N."/>
            <person name="Richardson P.M."/>
            <person name="Shakhova V.V."/>
            <person name="Slesarev A.I."/>
            <person name="Weimer B."/>
            <person name="O'Sullivan D.J."/>
        </authorList>
    </citation>
    <scope>NUCLEOTIDE SEQUENCE [LARGE SCALE GENOMIC DNA]</scope>
    <source>
        <strain>DJO10A</strain>
    </source>
</reference>
<comment type="subunit">
    <text evidence="1">Part of the 50S ribosomal subunit.</text>
</comment>
<comment type="similarity">
    <text evidence="1">Belongs to the universal ribosomal protein uL30 family.</text>
</comment>
<organism>
    <name type="scientific">Bifidobacterium longum (strain DJO10A)</name>
    <dbReference type="NCBI Taxonomy" id="205913"/>
    <lineage>
        <taxon>Bacteria</taxon>
        <taxon>Bacillati</taxon>
        <taxon>Actinomycetota</taxon>
        <taxon>Actinomycetes</taxon>
        <taxon>Bifidobacteriales</taxon>
        <taxon>Bifidobacteriaceae</taxon>
        <taxon>Bifidobacterium</taxon>
    </lineage>
</organism>
<sequence length="61" mass="6695">MAKNLKITLHHGIVNRTPAQRATVKTLGLNKIGKTVVREDTPANRGLVNAVRHLVTVEEVD</sequence>
<keyword id="KW-0687">Ribonucleoprotein</keyword>
<keyword id="KW-0689">Ribosomal protein</keyword>
<gene>
    <name evidence="1" type="primary">rpmD</name>
    <name type="ordered locus">BLD_1725</name>
</gene>
<name>RL30_BIFLD</name>